<proteinExistence type="inferred from homology"/>
<comment type="similarity">
    <text evidence="2">Belongs to the poxviruses Kelch family.</text>
</comment>
<keyword id="KW-0880">Kelch repeat</keyword>
<keyword id="KW-0677">Repeat</keyword>
<gene>
    <name type="ORF">C13L</name>
</gene>
<name>VC13_SWPVK</name>
<reference key="1">
    <citation type="journal article" date="1993" name="Virology">
        <title>DNA sequence analysis of conserved and unique regions of swinepox virus: identification of genetic elements supporting phenotypic observations including a novel G protein-coupled receptor homologue.</title>
        <authorList>
            <person name="Massung R.F."/>
            <person name="Jayarama V."/>
            <person name="Moyer R.W."/>
        </authorList>
    </citation>
    <scope>NUCLEOTIDE SEQUENCE</scope>
</reference>
<dbReference type="EMBL" id="L22013">
    <property type="protein sequence ID" value="AAC37858.1"/>
    <property type="molecule type" value="Unassigned_RNA"/>
</dbReference>
<dbReference type="SMR" id="P32206"/>
<dbReference type="Gene3D" id="1.25.40.420">
    <property type="match status" value="1"/>
</dbReference>
<dbReference type="Gene3D" id="2.120.10.80">
    <property type="entry name" value="Kelch-type beta propeller"/>
    <property type="match status" value="1"/>
</dbReference>
<dbReference type="Gene3D" id="3.30.710.10">
    <property type="entry name" value="Potassium Channel Kv1.1, Chain A"/>
    <property type="match status" value="1"/>
</dbReference>
<dbReference type="InterPro" id="IPR011705">
    <property type="entry name" value="BACK"/>
</dbReference>
<dbReference type="InterPro" id="IPR000210">
    <property type="entry name" value="BTB/POZ_dom"/>
</dbReference>
<dbReference type="InterPro" id="IPR015915">
    <property type="entry name" value="Kelch-typ_b-propeller"/>
</dbReference>
<dbReference type="InterPro" id="IPR006652">
    <property type="entry name" value="Kelch_1"/>
</dbReference>
<dbReference type="InterPro" id="IPR011333">
    <property type="entry name" value="SKP1/BTB/POZ_sf"/>
</dbReference>
<dbReference type="PANTHER" id="PTHR24412">
    <property type="entry name" value="KELCH PROTEIN"/>
    <property type="match status" value="1"/>
</dbReference>
<dbReference type="PANTHER" id="PTHR24412:SF489">
    <property type="entry name" value="RING FINGER DOMAIN AND KELCH REPEAT-CONTAINING PROTEIN DDB_G0271372"/>
    <property type="match status" value="1"/>
</dbReference>
<dbReference type="Pfam" id="PF07707">
    <property type="entry name" value="BACK"/>
    <property type="match status" value="1"/>
</dbReference>
<dbReference type="Pfam" id="PF00651">
    <property type="entry name" value="BTB"/>
    <property type="match status" value="1"/>
</dbReference>
<dbReference type="Pfam" id="PF01344">
    <property type="entry name" value="Kelch_1"/>
    <property type="match status" value="3"/>
</dbReference>
<dbReference type="SMART" id="SM00875">
    <property type="entry name" value="BACK"/>
    <property type="match status" value="1"/>
</dbReference>
<dbReference type="SMART" id="SM00225">
    <property type="entry name" value="BTB"/>
    <property type="match status" value="1"/>
</dbReference>
<dbReference type="SMART" id="SM00612">
    <property type="entry name" value="Kelch"/>
    <property type="match status" value="3"/>
</dbReference>
<dbReference type="SUPFAM" id="SSF117281">
    <property type="entry name" value="Kelch motif"/>
    <property type="match status" value="1"/>
</dbReference>
<dbReference type="SUPFAM" id="SSF54695">
    <property type="entry name" value="POZ domain"/>
    <property type="match status" value="1"/>
</dbReference>
<dbReference type="PROSITE" id="PS50097">
    <property type="entry name" value="BTB"/>
    <property type="match status" value="1"/>
</dbReference>
<feature type="chain" id="PRO_0000119169" description="Protein C13">
    <location>
        <begin position="1"/>
        <end position="500"/>
    </location>
</feature>
<feature type="domain" description="BTB" evidence="1">
    <location>
        <begin position="27"/>
        <end position="89"/>
    </location>
</feature>
<feature type="repeat" description="Kelch 1">
    <location>
        <begin position="301"/>
        <end position="348"/>
    </location>
</feature>
<feature type="repeat" description="Kelch 2">
    <location>
        <begin position="349"/>
        <end position="395"/>
    </location>
</feature>
<feature type="repeat" description="Kelch 3">
    <location>
        <begin position="397"/>
        <end position="440"/>
    </location>
</feature>
<feature type="repeat" description="Kelch 4">
    <location>
        <begin position="441"/>
        <end position="490"/>
    </location>
</feature>
<accession>P32206</accession>
<evidence type="ECO:0000255" key="1">
    <source>
        <dbReference type="PROSITE-ProRule" id="PRU00037"/>
    </source>
</evidence>
<evidence type="ECO:0000305" key="2"/>
<protein>
    <recommendedName>
        <fullName>Protein C13</fullName>
    </recommendedName>
</protein>
<sequence length="500" mass="57476">MSKQETYIDYNYIERLNAVNLNRSYDEEIVFIMTVGGVVKVKKELLVSVSNYFKLITKNQSNEITVSFQYESFLDIIKYIETGIVTIDLDNVENIFSISCSKAIDFLKNSCIDFMSKHITDSTCVKIYKIGFSNGCFAVYNDAIAYIRKRFTKIETDILLSLSLFDLRIILKSGELDVSSEDDVLLFIIKWSRHKKSNRRKSFTLVTEVLRYNYLSIYGKYKLTKWLARFGKNNNVELNENELPRISYQHRFTNRRYTMVTPSSFSINMLGNVSVKNELSIINSIAENHNPYCGSVLMNDILYLIGGINKSLDPVSDITSVDTRSFIELHTPPLLHPRKCPGVAIFKNRIYVVGGIGYDGPLKTVESWSPGEQQWREEVPLLQPRFNPCIIGTDNDLYVVGGISEDDKTIEIYSYEENTWSIGNAMNYSHFGGCIAYHHGYIYMIGGLSFIDNIHVFTMVEKYNPHSNKWTVEKSLPFPRFNSSLCIIEDSIAIIGWIYY</sequence>
<organism>
    <name type="scientific">Swinepox virus (strain Kasza)</name>
    <name type="common">SWPV</name>
    <dbReference type="NCBI Taxonomy" id="10277"/>
    <lineage>
        <taxon>Viruses</taxon>
        <taxon>Varidnaviria</taxon>
        <taxon>Bamfordvirae</taxon>
        <taxon>Nucleocytoviricota</taxon>
        <taxon>Pokkesviricetes</taxon>
        <taxon>Chitovirales</taxon>
        <taxon>Poxviridae</taxon>
        <taxon>Chordopoxvirinae</taxon>
        <taxon>Suipoxvirus</taxon>
        <taxon>Swinepox virus</taxon>
    </lineage>
</organism>
<organismHost>
    <name type="scientific">Sus scrofa</name>
    <name type="common">Pig</name>
    <dbReference type="NCBI Taxonomy" id="9823"/>
</organismHost>